<keyword id="KW-0687">Ribonucleoprotein</keyword>
<keyword id="KW-0689">Ribosomal protein</keyword>
<proteinExistence type="inferred from homology"/>
<protein>
    <recommendedName>
        <fullName evidence="1">Small ribosomal subunit protein uS2</fullName>
    </recommendedName>
    <alternativeName>
        <fullName evidence="3">30S ribosomal protein S2</fullName>
    </alternativeName>
</protein>
<dbReference type="EMBL" id="CP000792">
    <property type="protein sequence ID" value="EAT99296.1"/>
    <property type="molecule type" value="Genomic_DNA"/>
</dbReference>
<dbReference type="RefSeq" id="WP_002941277.1">
    <property type="nucleotide sequence ID" value="NC_009802.2"/>
</dbReference>
<dbReference type="SMR" id="A7ZF28"/>
<dbReference type="STRING" id="360104.CCC13826_0551"/>
<dbReference type="KEGG" id="cco:CCC13826_0551"/>
<dbReference type="eggNOG" id="COG0052">
    <property type="taxonomic scope" value="Bacteria"/>
</dbReference>
<dbReference type="HOGENOM" id="CLU_040318_2_3_7"/>
<dbReference type="OrthoDB" id="9808036at2"/>
<dbReference type="Proteomes" id="UP000001121">
    <property type="component" value="Chromosome"/>
</dbReference>
<dbReference type="GO" id="GO:0022627">
    <property type="term" value="C:cytosolic small ribosomal subunit"/>
    <property type="evidence" value="ECO:0007669"/>
    <property type="project" value="TreeGrafter"/>
</dbReference>
<dbReference type="GO" id="GO:0003735">
    <property type="term" value="F:structural constituent of ribosome"/>
    <property type="evidence" value="ECO:0007669"/>
    <property type="project" value="InterPro"/>
</dbReference>
<dbReference type="GO" id="GO:0006412">
    <property type="term" value="P:translation"/>
    <property type="evidence" value="ECO:0007669"/>
    <property type="project" value="UniProtKB-UniRule"/>
</dbReference>
<dbReference type="CDD" id="cd01425">
    <property type="entry name" value="RPS2"/>
    <property type="match status" value="1"/>
</dbReference>
<dbReference type="FunFam" id="1.10.287.610:FF:000001">
    <property type="entry name" value="30S ribosomal protein S2"/>
    <property type="match status" value="1"/>
</dbReference>
<dbReference type="Gene3D" id="3.40.50.10490">
    <property type="entry name" value="Glucose-6-phosphate isomerase like protein, domain 1"/>
    <property type="match status" value="1"/>
</dbReference>
<dbReference type="Gene3D" id="1.10.287.610">
    <property type="entry name" value="Helix hairpin bin"/>
    <property type="match status" value="1"/>
</dbReference>
<dbReference type="HAMAP" id="MF_00291_B">
    <property type="entry name" value="Ribosomal_uS2_B"/>
    <property type="match status" value="1"/>
</dbReference>
<dbReference type="InterPro" id="IPR001865">
    <property type="entry name" value="Ribosomal_uS2"/>
</dbReference>
<dbReference type="InterPro" id="IPR005706">
    <property type="entry name" value="Ribosomal_uS2_bac/mit/plastid"/>
</dbReference>
<dbReference type="InterPro" id="IPR018130">
    <property type="entry name" value="Ribosomal_uS2_CS"/>
</dbReference>
<dbReference type="InterPro" id="IPR023591">
    <property type="entry name" value="Ribosomal_uS2_flav_dom_sf"/>
</dbReference>
<dbReference type="NCBIfam" id="TIGR01011">
    <property type="entry name" value="rpsB_bact"/>
    <property type="match status" value="1"/>
</dbReference>
<dbReference type="PANTHER" id="PTHR12534">
    <property type="entry name" value="30S RIBOSOMAL PROTEIN S2 PROKARYOTIC AND ORGANELLAR"/>
    <property type="match status" value="1"/>
</dbReference>
<dbReference type="PANTHER" id="PTHR12534:SF0">
    <property type="entry name" value="SMALL RIBOSOMAL SUBUNIT PROTEIN US2M"/>
    <property type="match status" value="1"/>
</dbReference>
<dbReference type="Pfam" id="PF00318">
    <property type="entry name" value="Ribosomal_S2"/>
    <property type="match status" value="1"/>
</dbReference>
<dbReference type="PRINTS" id="PR00395">
    <property type="entry name" value="RIBOSOMALS2"/>
</dbReference>
<dbReference type="SUPFAM" id="SSF52313">
    <property type="entry name" value="Ribosomal protein S2"/>
    <property type="match status" value="1"/>
</dbReference>
<dbReference type="PROSITE" id="PS00962">
    <property type="entry name" value="RIBOSOMAL_S2_1"/>
    <property type="match status" value="1"/>
</dbReference>
<dbReference type="PROSITE" id="PS00963">
    <property type="entry name" value="RIBOSOMAL_S2_2"/>
    <property type="match status" value="1"/>
</dbReference>
<reference key="1">
    <citation type="submission" date="2007-10" db="EMBL/GenBank/DDBJ databases">
        <title>Genome sequence of Campylobacter concisus 13826 isolated from human feces.</title>
        <authorList>
            <person name="Fouts D.E."/>
            <person name="Mongodin E.F."/>
            <person name="Puiu D."/>
            <person name="Sebastian Y."/>
            <person name="Miller W.G."/>
            <person name="Mandrell R.E."/>
            <person name="On S."/>
            <person name="Nelson K.E."/>
        </authorList>
    </citation>
    <scope>NUCLEOTIDE SEQUENCE [LARGE SCALE GENOMIC DNA]</scope>
    <source>
        <strain>13826</strain>
    </source>
</reference>
<organism>
    <name type="scientific">Campylobacter concisus (strain 13826)</name>
    <dbReference type="NCBI Taxonomy" id="360104"/>
    <lineage>
        <taxon>Bacteria</taxon>
        <taxon>Pseudomonadati</taxon>
        <taxon>Campylobacterota</taxon>
        <taxon>Epsilonproteobacteria</taxon>
        <taxon>Campylobacterales</taxon>
        <taxon>Campylobacteraceae</taxon>
        <taxon>Campylobacter</taxon>
    </lineage>
</organism>
<gene>
    <name evidence="1" type="primary">rpsB</name>
    <name type="ordered locus">Ccon26_15390</name>
    <name type="ORF">CCC13826_0551</name>
</gene>
<evidence type="ECO:0000255" key="1">
    <source>
        <dbReference type="HAMAP-Rule" id="MF_00291"/>
    </source>
</evidence>
<evidence type="ECO:0000256" key="2">
    <source>
        <dbReference type="SAM" id="MobiDB-lite"/>
    </source>
</evidence>
<evidence type="ECO:0000305" key="3"/>
<sequence>MVTMRDLLECGVHFGHQTRRWNPKMKKFIFGERKGIYIIDLQKTIRYFRYTYNIVRDAAAEGKSVLFVGTKKQAIDAIKEYAEKCGMPYVNHRWLGGMMTNFGTIRQSIRKLEVIETMEEDGSINLLTKKEALMLRRKKEKLIATLGGIRNMKSLPDMIFVVDTVKEKIAVQEANRLKIPVVAPIDTNCDPDVVDYPIPGNDDAIRSVQLFCQEMAEAINEGKSLLEQDGGEQAAGEEVSQDEKDAVVAEAMSEEDFGEDEE</sequence>
<accession>A7ZF28</accession>
<name>RS2_CAMC1</name>
<feature type="chain" id="PRO_1000003919" description="Small ribosomal subunit protein uS2">
    <location>
        <begin position="1"/>
        <end position="262"/>
    </location>
</feature>
<feature type="region of interest" description="Disordered" evidence="2">
    <location>
        <begin position="223"/>
        <end position="262"/>
    </location>
</feature>
<feature type="compositionally biased region" description="Low complexity" evidence="2">
    <location>
        <begin position="227"/>
        <end position="238"/>
    </location>
</feature>
<feature type="compositionally biased region" description="Acidic residues" evidence="2">
    <location>
        <begin position="252"/>
        <end position="262"/>
    </location>
</feature>
<comment type="similarity">
    <text evidence="1">Belongs to the universal ribosomal protein uS2 family.</text>
</comment>